<reference evidence="4" key="1">
    <citation type="journal article" date="2009" name="Gen. Comp. Endocrinol.">
        <title>Extended FMRFamides in dipteran insects: conservative expression in the neuroendocrine system is accompanied by rapid sequence evolution.</title>
        <authorList>
            <person name="Rahman M.M."/>
            <person name="Fromm B."/>
            <person name="Neupert S."/>
            <person name="Kreusch S."/>
            <person name="Predel R."/>
        </authorList>
    </citation>
    <scope>PROTEIN SEQUENCE</scope>
    <scope>MASS SPECTROMETRY</scope>
    <scope>AMIDATION AT PHE-9</scope>
    <source>
        <tissue evidence="2">Dorsal ganglionic sheath</tissue>
    </source>
</reference>
<proteinExistence type="evidence at protein level"/>
<name>FAR9_SARBU</name>
<dbReference type="GO" id="GO:0005576">
    <property type="term" value="C:extracellular region"/>
    <property type="evidence" value="ECO:0007669"/>
    <property type="project" value="UniProtKB-SubCell"/>
</dbReference>
<dbReference type="GO" id="GO:0007218">
    <property type="term" value="P:neuropeptide signaling pathway"/>
    <property type="evidence" value="ECO:0007669"/>
    <property type="project" value="UniProtKB-KW"/>
</dbReference>
<organism>
    <name type="scientific">Sarcophaga bullata</name>
    <name type="common">Grey flesh fly</name>
    <name type="synonym">Neobellieria bullata</name>
    <dbReference type="NCBI Taxonomy" id="7385"/>
    <lineage>
        <taxon>Eukaryota</taxon>
        <taxon>Metazoa</taxon>
        <taxon>Ecdysozoa</taxon>
        <taxon>Arthropoda</taxon>
        <taxon>Hexapoda</taxon>
        <taxon>Insecta</taxon>
        <taxon>Pterygota</taxon>
        <taxon>Neoptera</taxon>
        <taxon>Endopterygota</taxon>
        <taxon>Diptera</taxon>
        <taxon>Brachycera</taxon>
        <taxon>Muscomorpha</taxon>
        <taxon>Oestroidea</taxon>
        <taxon>Sarcophagidae</taxon>
        <taxon>Sarcophaga</taxon>
        <taxon>Neobellieria</taxon>
    </lineage>
</organism>
<accession>P85466</accession>
<evidence type="ECO:0000255" key="1"/>
<evidence type="ECO:0000269" key="2">
    <source>
    </source>
</evidence>
<evidence type="ECO:0000303" key="3">
    <source>
    </source>
</evidence>
<evidence type="ECO:0000305" key="4"/>
<sequence>GHADNFMRF</sequence>
<protein>
    <recommendedName>
        <fullName>FMRFamide-9</fullName>
    </recommendedName>
    <alternativeName>
        <fullName evidence="3">SabFMRFamide-9</fullName>
    </alternativeName>
</protein>
<keyword id="KW-0027">Amidation</keyword>
<keyword id="KW-0903">Direct protein sequencing</keyword>
<keyword id="KW-0527">Neuropeptide</keyword>
<keyword id="KW-0964">Secreted</keyword>
<comment type="subcellular location">
    <subcellularLocation>
        <location evidence="4">Secreted</location>
    </subcellularLocation>
</comment>
<comment type="mass spectrometry"/>
<comment type="similarity">
    <text evidence="1">Belongs to the FARP (FMRFamide related peptide) family.</text>
</comment>
<feature type="peptide" id="PRO_0000371768" description="FMRFamide-9">
    <location>
        <begin position="1"/>
        <end position="9"/>
    </location>
</feature>
<feature type="modified residue" description="Phenylalanine amide" evidence="2">
    <location>
        <position position="9"/>
    </location>
</feature>